<name>RAB2A_RABIT</name>
<feature type="initiator methionine" description="Removed" evidence="3">
    <location>
        <position position="1"/>
    </location>
</feature>
<feature type="chain" id="PRO_0000121068" description="Ras-related protein Rab-2A">
    <location>
        <begin position="2"/>
        <end position="212"/>
    </location>
</feature>
<feature type="region of interest" description="Required for interaction with PRKCI" evidence="1">
    <location>
        <begin position="2"/>
        <end position="19"/>
    </location>
</feature>
<feature type="short sequence motif" description="Switch 1" evidence="4">
    <location>
        <begin position="37"/>
        <end position="42"/>
    </location>
</feature>
<feature type="short sequence motif" description="Switch 2" evidence="4">
    <location>
        <begin position="63"/>
        <end position="72"/>
    </location>
</feature>
<feature type="binding site" evidence="4">
    <location>
        <position position="16"/>
    </location>
    <ligand>
        <name>GTP</name>
        <dbReference type="ChEBI" id="CHEBI:37565"/>
    </ligand>
</feature>
<feature type="binding site" evidence="4">
    <location>
        <position position="17"/>
    </location>
    <ligand>
        <name>GTP</name>
        <dbReference type="ChEBI" id="CHEBI:37565"/>
    </ligand>
</feature>
<feature type="binding site" evidence="4">
    <location>
        <position position="18"/>
    </location>
    <ligand>
        <name>GTP</name>
        <dbReference type="ChEBI" id="CHEBI:37565"/>
    </ligand>
</feature>
<feature type="binding site" evidence="4">
    <location>
        <position position="19"/>
    </location>
    <ligand>
        <name>GTP</name>
        <dbReference type="ChEBI" id="CHEBI:37565"/>
    </ligand>
</feature>
<feature type="binding site" evidence="4">
    <location>
        <position position="20"/>
    </location>
    <ligand>
        <name>GTP</name>
        <dbReference type="ChEBI" id="CHEBI:37565"/>
    </ligand>
</feature>
<feature type="binding site" evidence="3">
    <location>
        <position position="20"/>
    </location>
    <ligand>
        <name>Mg(2+)</name>
        <dbReference type="ChEBI" id="CHEBI:18420"/>
    </ligand>
</feature>
<feature type="binding site" evidence="4">
    <location>
        <position position="21"/>
    </location>
    <ligand>
        <name>GTP</name>
        <dbReference type="ChEBI" id="CHEBI:37565"/>
    </ligand>
</feature>
<feature type="binding site" evidence="4">
    <location>
        <position position="38"/>
    </location>
    <ligand>
        <name>GTP</name>
        <dbReference type="ChEBI" id="CHEBI:37565"/>
    </ligand>
</feature>
<feature type="binding site" evidence="4">
    <location>
        <position position="38"/>
    </location>
    <ligand>
        <name>Mg(2+)</name>
        <dbReference type="ChEBI" id="CHEBI:18420"/>
    </ligand>
</feature>
<feature type="binding site" evidence="3">
    <location>
        <position position="61"/>
    </location>
    <ligand>
        <name>Mg(2+)</name>
        <dbReference type="ChEBI" id="CHEBI:18420"/>
    </ligand>
</feature>
<feature type="binding site" evidence="4">
    <location>
        <position position="64"/>
    </location>
    <ligand>
        <name>GTP</name>
        <dbReference type="ChEBI" id="CHEBI:37565"/>
    </ligand>
</feature>
<feature type="binding site" evidence="4">
    <location>
        <position position="119"/>
    </location>
    <ligand>
        <name>GTP</name>
        <dbReference type="ChEBI" id="CHEBI:37565"/>
    </ligand>
</feature>
<feature type="binding site" evidence="4">
    <location>
        <position position="120"/>
    </location>
    <ligand>
        <name>GTP</name>
        <dbReference type="ChEBI" id="CHEBI:37565"/>
    </ligand>
</feature>
<feature type="binding site" evidence="4">
    <location>
        <position position="122"/>
    </location>
    <ligand>
        <name>GTP</name>
        <dbReference type="ChEBI" id="CHEBI:37565"/>
    </ligand>
</feature>
<feature type="binding site" evidence="4">
    <location>
        <position position="150"/>
    </location>
    <ligand>
        <name>GTP</name>
        <dbReference type="ChEBI" id="CHEBI:37565"/>
    </ligand>
</feature>
<feature type="binding site" evidence="4">
    <location>
        <position position="151"/>
    </location>
    <ligand>
        <name>GTP</name>
        <dbReference type="ChEBI" id="CHEBI:37565"/>
    </ligand>
</feature>
<feature type="modified residue" description="N-acetylalanine" evidence="3">
    <location>
        <position position="2"/>
    </location>
</feature>
<feature type="lipid moiety-binding region" description="S-geranylgeranyl cysteine" evidence="1">
    <location>
        <position position="211"/>
    </location>
</feature>
<feature type="lipid moiety-binding region" description="S-geranylgeranyl cysteine" evidence="1">
    <location>
        <position position="212"/>
    </location>
</feature>
<sequence length="212" mass="23532">MAYAYLFKYIIIGDTGVGKSCLLLQFTDKRFQPVHDLTIGVEFGARMITIDGKQIKLQIWDTAGQESFRSITRSYYRGAAGALLVYDITRRDTFNHLTTWLEDARQHSNSNMVIMLIGNKSDLESRREVKKEEGEAFAREHGLIFMETSAKTASNVEEAFINTAKEIYEKIQEGVFDINNEANGIKIGPQHGATNATHAGNQGGQQAGGGCC</sequence>
<comment type="function">
    <text evidence="3">The small GTPases Rab are key regulators of intracellular membrane trafficking, from the formation of transport vesicles to their fusion with membranes. Rabs cycle between active GTP-bound and inactive GDP-bound states. In their active state, drive transport of vesicular carriers from donor organelles to acceptor organelles to regulate the membrane traffic that maintains organelle identity and morphology. RAB2A regulates autophagy by promoting autophagosome-lysosome fusion via recruitment of the HOPS endosomal tethering complex; this process involves autophagosomal RAB2A and lysosomal RAB39A recruitment of HOPS subcomplexes VPS39-VPS11 and VPS41-VPS16-VPS18-VPS33A, respectively, which assemble into a functional complex to mediate membrane tethering and SNAREs-driven membrane fusion. Required for protein transport from the endoplasmic reticulum to the Golgi complex. Regulates the compacted morphology of the Golgi. Together with RAB2B, redundantly required for efficient autophagic flux.</text>
</comment>
<comment type="catalytic activity">
    <reaction evidence="2">
        <text>GTP + H2O = GDP + phosphate + H(+)</text>
        <dbReference type="Rhea" id="RHEA:19669"/>
        <dbReference type="ChEBI" id="CHEBI:15377"/>
        <dbReference type="ChEBI" id="CHEBI:15378"/>
        <dbReference type="ChEBI" id="CHEBI:37565"/>
        <dbReference type="ChEBI" id="CHEBI:43474"/>
        <dbReference type="ChEBI" id="CHEBI:58189"/>
        <dbReference type="EC" id="3.6.5.2"/>
    </reaction>
    <physiologicalReaction direction="left-to-right" evidence="2">
        <dbReference type="Rhea" id="RHEA:19670"/>
    </physiologicalReaction>
</comment>
<comment type="cofactor">
    <cofactor evidence="3">
        <name>Mg(2+)</name>
        <dbReference type="ChEBI" id="CHEBI:18420"/>
    </cofactor>
</comment>
<comment type="activity regulation">
    <text evidence="5">Regulated by guanine nucleotide exchange factors (GEFs) which promote the exchange of bound GDP for free GTP, GTPase activating proteins (GAPs) which increase the GTP hydrolysis activity, and GDP dissociation inhibitors (GDIs) which inhibit the dissociation of the nucleotide from the GTPase.</text>
</comment>
<comment type="subunit">
    <text evidence="2 3">Interacts with PRKCI. Interacts with TRIP11 (By similarity). Interacts (in GTP-bound form) with GARIN1B (By similarity). Interacts (GTP-bound) with HOPS complex component VPS39; interaction contributes to obtaining a functional HOPS complex that promotes autophagosome-lysosome membrane fusion driven by STX17-SNAP29-VAMP8. May interact with VPS41 (By similarity).</text>
</comment>
<comment type="subcellular location">
    <subcellularLocation>
        <location evidence="3">Endoplasmic reticulum-Golgi intermediate compartment membrane</location>
        <topology evidence="3">Lipid-anchor</topology>
        <orientation evidence="5">Cytoplasmic side</orientation>
    </subcellularLocation>
    <subcellularLocation>
        <location evidence="3">Melanosome</location>
    </subcellularLocation>
    <subcellularLocation>
        <location evidence="3">Endoplasmic reticulum membrane</location>
        <topology evidence="3">Lipid-anchor</topology>
        <orientation evidence="5">Cytoplasmic side</orientation>
    </subcellularLocation>
    <subcellularLocation>
        <location evidence="3">Golgi apparatus membrane</location>
        <topology evidence="3">Lipid-anchor</topology>
        <orientation evidence="5">Cytoplasmic side</orientation>
    </subcellularLocation>
    <subcellularLocation>
        <location evidence="2">Cytoplasmic vesicle</location>
        <location evidence="2">Secretory vesicle</location>
        <location evidence="2">Acrosome</location>
    </subcellularLocation>
    <subcellularLocation>
        <location evidence="2">Cytoplasmic vesicle</location>
        <location evidence="2">Autophagosome membrane</location>
        <topology evidence="3">Lipid-anchor</topology>
        <orientation evidence="5">Cytoplasmic side</orientation>
    </subcellularLocation>
    <text evidence="2 3">Localized in the Golgi apparatus in the round spermatids and in the acrosome in the elongating spermatid (By similarity). Identified by mass spectrometry in melanosome fractions from stage I to stage IV (By similarity).</text>
</comment>
<comment type="tissue specificity">
    <text>Brain and parietal cells.</text>
</comment>
<comment type="domain">
    <text evidence="4">Switch I, switch II and the interswitch regions are characteristic of Rab GTPases and mediate the interactions with Rab downstream effectors. The switch regions undergo conformational changes upon nucleotide binding which drives interaction with specific sets of effector proteins, with most effectors only binding to GTP-bound Rab.</text>
</comment>
<comment type="PTM">
    <text evidence="3">Prenylated. Prenylation is required for association with cellular membranes.</text>
</comment>
<comment type="similarity">
    <text evidence="5">Belongs to the small GTPase superfamily. Rab family.</text>
</comment>
<reference key="1">
    <citation type="journal article" date="1992" name="Biochem. J.">
        <title>Identification of rab2 as a tubulovesicle-membrane-associated protein in rabbit gastric parietal cells.</title>
        <authorList>
            <person name="Tang L.H."/>
            <person name="Stoch S.A."/>
            <person name="Modlin I.M."/>
            <person name="Goldenring J.R."/>
        </authorList>
    </citation>
    <scope>NUCLEOTIDE SEQUENCE [MRNA]</scope>
</reference>
<organism>
    <name type="scientific">Oryctolagus cuniculus</name>
    <name type="common">Rabbit</name>
    <dbReference type="NCBI Taxonomy" id="9986"/>
    <lineage>
        <taxon>Eukaryota</taxon>
        <taxon>Metazoa</taxon>
        <taxon>Chordata</taxon>
        <taxon>Craniata</taxon>
        <taxon>Vertebrata</taxon>
        <taxon>Euteleostomi</taxon>
        <taxon>Mammalia</taxon>
        <taxon>Eutheria</taxon>
        <taxon>Euarchontoglires</taxon>
        <taxon>Glires</taxon>
        <taxon>Lagomorpha</taxon>
        <taxon>Leporidae</taxon>
        <taxon>Oryctolagus</taxon>
    </lineage>
</organism>
<dbReference type="EC" id="3.6.5.2" evidence="2"/>
<dbReference type="EMBL" id="X68071">
    <property type="protein sequence ID" value="CAA48208.1"/>
    <property type="molecule type" value="mRNA"/>
</dbReference>
<dbReference type="PIR" id="S23979">
    <property type="entry name" value="S23979"/>
</dbReference>
<dbReference type="RefSeq" id="NP_001095172.1">
    <property type="nucleotide sequence ID" value="NM_001101702.1"/>
</dbReference>
<dbReference type="SMR" id="Q01971"/>
<dbReference type="FunCoup" id="Q01971">
    <property type="interactions" value="1954"/>
</dbReference>
<dbReference type="STRING" id="9986.ENSOCUP00000000293"/>
<dbReference type="PaxDb" id="9986-ENSOCUP00000002569"/>
<dbReference type="GeneID" id="100009281"/>
<dbReference type="KEGG" id="ocu:100009281"/>
<dbReference type="CTD" id="5862"/>
<dbReference type="eggNOG" id="KOG0098">
    <property type="taxonomic scope" value="Eukaryota"/>
</dbReference>
<dbReference type="InParanoid" id="Q01971"/>
<dbReference type="OrthoDB" id="9989112at2759"/>
<dbReference type="Proteomes" id="UP000001811">
    <property type="component" value="Unplaced"/>
</dbReference>
<dbReference type="GO" id="GO:0001669">
    <property type="term" value="C:acrosomal vesicle"/>
    <property type="evidence" value="ECO:0007669"/>
    <property type="project" value="UniProtKB-SubCell"/>
</dbReference>
<dbReference type="GO" id="GO:0000421">
    <property type="term" value="C:autophagosome membrane"/>
    <property type="evidence" value="ECO:0007669"/>
    <property type="project" value="UniProtKB-SubCell"/>
</dbReference>
<dbReference type="GO" id="GO:0005789">
    <property type="term" value="C:endoplasmic reticulum membrane"/>
    <property type="evidence" value="ECO:0007669"/>
    <property type="project" value="UniProtKB-SubCell"/>
</dbReference>
<dbReference type="GO" id="GO:0033116">
    <property type="term" value="C:endoplasmic reticulum-Golgi intermediate compartment membrane"/>
    <property type="evidence" value="ECO:0007669"/>
    <property type="project" value="UniProtKB-SubCell"/>
</dbReference>
<dbReference type="GO" id="GO:0000139">
    <property type="term" value="C:Golgi membrane"/>
    <property type="evidence" value="ECO:0007669"/>
    <property type="project" value="UniProtKB-SubCell"/>
</dbReference>
<dbReference type="GO" id="GO:0042470">
    <property type="term" value="C:melanosome"/>
    <property type="evidence" value="ECO:0007669"/>
    <property type="project" value="UniProtKB-SubCell"/>
</dbReference>
<dbReference type="GO" id="GO:0003925">
    <property type="term" value="F:G protein activity"/>
    <property type="evidence" value="ECO:0000250"/>
    <property type="project" value="UniProtKB"/>
</dbReference>
<dbReference type="GO" id="GO:0019003">
    <property type="term" value="F:GDP binding"/>
    <property type="evidence" value="ECO:0000250"/>
    <property type="project" value="UniProtKB"/>
</dbReference>
<dbReference type="GO" id="GO:0005525">
    <property type="term" value="F:GTP binding"/>
    <property type="evidence" value="ECO:0000250"/>
    <property type="project" value="UniProtKB"/>
</dbReference>
<dbReference type="GO" id="GO:0003924">
    <property type="term" value="F:GTPase activity"/>
    <property type="evidence" value="ECO:0000250"/>
    <property type="project" value="UniProtKB"/>
</dbReference>
<dbReference type="GO" id="GO:0061909">
    <property type="term" value="P:autophagosome-lysosome fusion"/>
    <property type="evidence" value="ECO:0000250"/>
    <property type="project" value="UniProtKB"/>
</dbReference>
<dbReference type="GO" id="GO:0007030">
    <property type="term" value="P:Golgi organization"/>
    <property type="evidence" value="ECO:0000250"/>
    <property type="project" value="UniProtKB"/>
</dbReference>
<dbReference type="GO" id="GO:0016236">
    <property type="term" value="P:macroautophagy"/>
    <property type="evidence" value="ECO:0000250"/>
    <property type="project" value="UniProtKB"/>
</dbReference>
<dbReference type="GO" id="GO:0015031">
    <property type="term" value="P:protein transport"/>
    <property type="evidence" value="ECO:0007669"/>
    <property type="project" value="UniProtKB-KW"/>
</dbReference>
<dbReference type="CDD" id="cd01866">
    <property type="entry name" value="Rab2"/>
    <property type="match status" value="1"/>
</dbReference>
<dbReference type="FunFam" id="3.40.50.300:FF:000275">
    <property type="entry name" value="Putative ras-related protein Rab-2A"/>
    <property type="match status" value="1"/>
</dbReference>
<dbReference type="Gene3D" id="3.40.50.300">
    <property type="entry name" value="P-loop containing nucleotide triphosphate hydrolases"/>
    <property type="match status" value="1"/>
</dbReference>
<dbReference type="InterPro" id="IPR027417">
    <property type="entry name" value="P-loop_NTPase"/>
</dbReference>
<dbReference type="InterPro" id="IPR050209">
    <property type="entry name" value="Rab_GTPases_membrane_traffic"/>
</dbReference>
<dbReference type="InterPro" id="IPR005225">
    <property type="entry name" value="Small_GTP-bd"/>
</dbReference>
<dbReference type="InterPro" id="IPR001806">
    <property type="entry name" value="Small_GTPase"/>
</dbReference>
<dbReference type="NCBIfam" id="TIGR00231">
    <property type="entry name" value="small_GTP"/>
    <property type="match status" value="1"/>
</dbReference>
<dbReference type="PANTHER" id="PTHR47979">
    <property type="entry name" value="DRAB11-RELATED"/>
    <property type="match status" value="1"/>
</dbReference>
<dbReference type="Pfam" id="PF00071">
    <property type="entry name" value="Ras"/>
    <property type="match status" value="1"/>
</dbReference>
<dbReference type="PRINTS" id="PR00449">
    <property type="entry name" value="RASTRNSFRMNG"/>
</dbReference>
<dbReference type="SMART" id="SM00175">
    <property type="entry name" value="RAB"/>
    <property type="match status" value="1"/>
</dbReference>
<dbReference type="SMART" id="SM00176">
    <property type="entry name" value="RAN"/>
    <property type="match status" value="1"/>
</dbReference>
<dbReference type="SMART" id="SM00173">
    <property type="entry name" value="RAS"/>
    <property type="match status" value="1"/>
</dbReference>
<dbReference type="SMART" id="SM00174">
    <property type="entry name" value="RHO"/>
    <property type="match status" value="1"/>
</dbReference>
<dbReference type="SUPFAM" id="SSF52540">
    <property type="entry name" value="P-loop containing nucleoside triphosphate hydrolases"/>
    <property type="match status" value="1"/>
</dbReference>
<dbReference type="PROSITE" id="PS51419">
    <property type="entry name" value="RAB"/>
    <property type="match status" value="1"/>
</dbReference>
<gene>
    <name type="primary">RAB2A</name>
    <name type="synonym">RAB2</name>
</gene>
<keyword id="KW-0007">Acetylation</keyword>
<keyword id="KW-0968">Cytoplasmic vesicle</keyword>
<keyword id="KW-0256">Endoplasmic reticulum</keyword>
<keyword id="KW-0931">ER-Golgi transport</keyword>
<keyword id="KW-0333">Golgi apparatus</keyword>
<keyword id="KW-0342">GTP-binding</keyword>
<keyword id="KW-0378">Hydrolase</keyword>
<keyword id="KW-0449">Lipoprotein</keyword>
<keyword id="KW-0460">Magnesium</keyword>
<keyword id="KW-0472">Membrane</keyword>
<keyword id="KW-0479">Metal-binding</keyword>
<keyword id="KW-0547">Nucleotide-binding</keyword>
<keyword id="KW-0636">Prenylation</keyword>
<keyword id="KW-0653">Protein transport</keyword>
<keyword id="KW-1185">Reference proteome</keyword>
<keyword id="KW-0813">Transport</keyword>
<protein>
    <recommendedName>
        <fullName>Ras-related protein Rab-2A</fullName>
        <ecNumber evidence="2">3.6.5.2</ecNumber>
    </recommendedName>
</protein>
<accession>Q01971</accession>
<proteinExistence type="evidence at transcript level"/>
<evidence type="ECO:0000250" key="1"/>
<evidence type="ECO:0000250" key="2">
    <source>
        <dbReference type="UniProtKB" id="P53994"/>
    </source>
</evidence>
<evidence type="ECO:0000250" key="3">
    <source>
        <dbReference type="UniProtKB" id="P61019"/>
    </source>
</evidence>
<evidence type="ECO:0000250" key="4">
    <source>
        <dbReference type="UniProtKB" id="P61106"/>
    </source>
</evidence>
<evidence type="ECO:0000305" key="5"/>